<sequence length="1015" mass="110815">MPVDKFLARAGGQRTLSRFQDSLCDFLATGSSRSLCGTSLDFPDRVLVCTEGPAGMEEASSPSFRQATTVEGMVSPEDPTLSKEGLSAKGPPPSPVLPPFRRKCRKCGICPQEEEKSGFSLRFGQRPDGDPPECASPEAFAGPPRLLSSKDTEPGEPGGSWVECAVETEVENMLFSKDGVAPDSLDHLFEFPGLFGGEPLSLVTQEPLQSPALYPEVLTEDSTDQQEVQPAFVVGSPGTPPDPVGPEDKAQSGSRMELEQGLSAPANSCASSPEPLGGLDGAPLEQRRPTHVKKRPWTSPDDSSQDHAEGASKKDFPRLEARVPRGVKTVYYVYTGSGIRLVGAASSSQPGQIEPLEELDTNSARRKRRPTTAHPTPCQSDPSETENAEPHQQRAEDPGEQGMTPLDAGVRSTVVRAMQEVLWTRAQELPDLALREDEVEAIAEGIEEALFHLTQDTNLRYKNKYRSLLFNLRDPRNVDLFLKVAHCDVTPNNLVQMSSIQLAPKELSRWRDQEERKGLDIIEQQQKELYRLPASKLTHKGEVEIPRDLDQMLTLEDLMEPIVPRECSLQPLSTPLEDTTNWHQHHQCDSNCQICTGGEEGRKADDGSQPELQVDISYNVDRKSSTKLPAFSGVIMNREENAIQKAPGPAPASSPEVLKVGETPPKEPQDRLQMPAGLKNAPPSPPPWEGSLDMFSIKHFRAKAQLISGHSCQLVQALPDVIRSAGRLPPSHVWDLLDSMGPSKAKDICVIRLCPHGSRDIQNYRLLYSYLNNKQCHCLATVQQVKMVLLPLPAFEPLPARLRPLGGPGLEITHTSLLLAVLFPKDALPDTATSIPVSNKVPKTVSFSKRVERILYSPEDRRSEATSSPLEEDPKQSLARGSLAPRSVCAPQSFPRGRGRQGPGWGQWSPEAAWCYSQHPSSAGPVFPGIGQGQHLHRASCFHHDLLQHLKVLVTMSHQFQASLWPQSQDSLPPSTVVSAVPDPPGPSLGPMDGGGSNCPPPEGSDPLEPPEHEC</sequence>
<keyword id="KW-0002">3D-structure</keyword>
<keyword id="KW-0158">Chromosome</keyword>
<keyword id="KW-0221">Differentiation</keyword>
<keyword id="KW-0539">Nucleus</keyword>
<keyword id="KW-1185">Reference proteome</keyword>
<keyword id="KW-0943">RNA-mediated gene silencing</keyword>
<keyword id="KW-0744">Spermatogenesis</keyword>
<comment type="function">
    <text evidence="3 4 5">Protein adapter that acts as an essential executor of PIWIL4-piRNA pathway directed transposon DNA methylation and silencing in the male embryonic germ cells (PubMed:32674113, PubMed:38359823, PubMed:39294378). Recruited to young transposons, which are specifically marked with histone H3 trimethylated at both 'Lys-4' and 'Lys-9' (H3K4me3K9me3), via its association with SPIN1 chromatin reader, and associates with the de novo DNA methylation machinery and repressive chromatin remodeling complexes (PubMed:32674113, PubMed:39294378). Following this, PIWIL4 engages with nascent transposable element transcript to direct piRNA-directed DNA methylation (PubMed:39294378). Not required for piRNA biosynthesis (PubMed:32674113).</text>
</comment>
<comment type="subunit">
    <text evidence="3 4 5">Interacts with DNMT3A, DNMT3C and DNMT3L (PubMed:32674113). Interacts with C19orf84 homolog (PubMed:38359823). Interacts with SPIN1; promoting recruitment to transposons marked with histone H3 trimethylated at both 'Lys-4' and 'Lys-9' (H3K4me3K9me3) (PubMed:39294378).</text>
</comment>
<comment type="subcellular location">
    <subcellularLocation>
        <location evidence="3">Nucleus</location>
    </subcellularLocation>
    <subcellularLocation>
        <location evidence="3 5">Chromosome</location>
    </subcellularLocation>
</comment>
<comment type="developmental stage">
    <text evidence="3">Detected in embryonic testis at 14.5 dpc and decreases by postnatal day 5.</text>
</comment>
<comment type="disruption phenotype">
    <text evidence="3">Male mice are infertile with spermatozoa completely absent in the epididymis (PubMed:32674113). Male germ cells show derepression of transposable elements (TEs) and DNA hypomethylation of TEs (PubMed:32674113).</text>
</comment>
<organism>
    <name type="scientific">Mus musculus</name>
    <name type="common">Mouse</name>
    <dbReference type="NCBI Taxonomy" id="10090"/>
    <lineage>
        <taxon>Eukaryota</taxon>
        <taxon>Metazoa</taxon>
        <taxon>Chordata</taxon>
        <taxon>Craniata</taxon>
        <taxon>Vertebrata</taxon>
        <taxon>Euteleostomi</taxon>
        <taxon>Mammalia</taxon>
        <taxon>Eutheria</taxon>
        <taxon>Euarchontoglires</taxon>
        <taxon>Glires</taxon>
        <taxon>Rodentia</taxon>
        <taxon>Myomorpha</taxon>
        <taxon>Muroidea</taxon>
        <taxon>Muridae</taxon>
        <taxon>Murinae</taxon>
        <taxon>Mus</taxon>
        <taxon>Mus</taxon>
    </lineage>
</organism>
<dbReference type="EMBL" id="GL456106">
    <property type="status" value="NOT_ANNOTATED_CDS"/>
    <property type="molecule type" value="Genomic_DNA"/>
</dbReference>
<dbReference type="RefSeq" id="XP_017175994.1">
    <property type="nucleotide sequence ID" value="XM_017320505.1"/>
</dbReference>
<dbReference type="PDB" id="8OU1">
    <property type="method" value="X-ray"/>
    <property type="resolution" value="1.70 A"/>
    <property type="chains" value="A/B=687-830"/>
</dbReference>
<dbReference type="PDBsum" id="8OU1"/>
<dbReference type="SMR" id="B1ASB6"/>
<dbReference type="FunCoup" id="B1ASB6">
    <property type="interactions" value="351"/>
</dbReference>
<dbReference type="STRING" id="10090.ENSMUSP00000081284"/>
<dbReference type="GlyGen" id="B1ASB6">
    <property type="glycosylation" value="1 site"/>
</dbReference>
<dbReference type="PhosphoSitePlus" id="B1ASB6"/>
<dbReference type="PaxDb" id="10090-ENSMUSP00000081284"/>
<dbReference type="Antibodypedia" id="31194">
    <property type="antibodies" value="22 antibodies from 11 providers"/>
</dbReference>
<dbReference type="GeneID" id="622480"/>
<dbReference type="KEGG" id="mmu:622480"/>
<dbReference type="AGR" id="MGI:3652045"/>
<dbReference type="CTD" id="90853"/>
<dbReference type="MGI" id="MGI:3652045">
    <property type="gene designation" value="Spocd1"/>
</dbReference>
<dbReference type="VEuPathDB" id="HostDB:ENSMUSG00000028784"/>
<dbReference type="eggNOG" id="KOG1634">
    <property type="taxonomic scope" value="Eukaryota"/>
</dbReference>
<dbReference type="HOGENOM" id="CLU_029996_0_0_1"/>
<dbReference type="InParanoid" id="B1ASB6"/>
<dbReference type="OrthoDB" id="73853at9989"/>
<dbReference type="PhylomeDB" id="B1ASB6"/>
<dbReference type="TreeFam" id="TF343963"/>
<dbReference type="ChiTaRS" id="Spocd1">
    <property type="organism name" value="mouse"/>
</dbReference>
<dbReference type="PRO" id="PR:B1ASB6"/>
<dbReference type="Proteomes" id="UP000000589">
    <property type="component" value="Chromosome 4"/>
</dbReference>
<dbReference type="RNAct" id="B1ASB6">
    <property type="molecule type" value="protein"/>
</dbReference>
<dbReference type="ExpressionAtlas" id="B1ASB6">
    <property type="expression patterns" value="baseline and differential"/>
</dbReference>
<dbReference type="GO" id="GO:0005694">
    <property type="term" value="C:chromosome"/>
    <property type="evidence" value="ECO:0007669"/>
    <property type="project" value="UniProtKB-SubCell"/>
</dbReference>
<dbReference type="GO" id="GO:0005654">
    <property type="term" value="C:nucleoplasm"/>
    <property type="evidence" value="ECO:0000304"/>
    <property type="project" value="Reactome"/>
</dbReference>
<dbReference type="GO" id="GO:0005634">
    <property type="term" value="C:nucleus"/>
    <property type="evidence" value="ECO:0000314"/>
    <property type="project" value="UniProtKB"/>
</dbReference>
<dbReference type="GO" id="GO:0030674">
    <property type="term" value="F:protein-macromolecule adaptor activity"/>
    <property type="evidence" value="ECO:0000314"/>
    <property type="project" value="UniProtKB"/>
</dbReference>
<dbReference type="GO" id="GO:0030154">
    <property type="term" value="P:cell differentiation"/>
    <property type="evidence" value="ECO:0007669"/>
    <property type="project" value="UniProtKB-KW"/>
</dbReference>
<dbReference type="GO" id="GO:0006351">
    <property type="term" value="P:DNA-templated transcription"/>
    <property type="evidence" value="ECO:0007669"/>
    <property type="project" value="InterPro"/>
</dbReference>
<dbReference type="GO" id="GO:0141176">
    <property type="term" value="P:gene silencing by piRNA-directed DNA methylation"/>
    <property type="evidence" value="ECO:0000315"/>
    <property type="project" value="FlyBase"/>
</dbReference>
<dbReference type="GO" id="GO:0007283">
    <property type="term" value="P:spermatogenesis"/>
    <property type="evidence" value="ECO:0000315"/>
    <property type="project" value="UniProtKB"/>
</dbReference>
<dbReference type="GO" id="GO:0141196">
    <property type="term" value="P:transposable element silencing by piRNA-mediated DNA methylation"/>
    <property type="evidence" value="ECO:0000314"/>
    <property type="project" value="UniProtKB"/>
</dbReference>
<dbReference type="GO" id="GO:0141006">
    <property type="term" value="P:transposable element silencing by piRNA-mediated heterochromatin formation"/>
    <property type="evidence" value="ECO:0000315"/>
    <property type="project" value="UniProtKB"/>
</dbReference>
<dbReference type="FunFam" id="1.10.472.30:FF:000004">
    <property type="entry name" value="SPOC domain containing 1"/>
    <property type="match status" value="1"/>
</dbReference>
<dbReference type="Gene3D" id="1.10.472.30">
    <property type="entry name" value="Transcription elongation factor S-II, central domain"/>
    <property type="match status" value="1"/>
</dbReference>
<dbReference type="InterPro" id="IPR012921">
    <property type="entry name" value="SPOC_C"/>
</dbReference>
<dbReference type="InterPro" id="IPR003618">
    <property type="entry name" value="TFIIS_cen_dom"/>
</dbReference>
<dbReference type="InterPro" id="IPR036575">
    <property type="entry name" value="TFIIS_cen_dom_sf"/>
</dbReference>
<dbReference type="PANTHER" id="PTHR11477:SF18">
    <property type="entry name" value="SPOC DOMAIN-CONTAINING PROTEIN 1"/>
    <property type="match status" value="1"/>
</dbReference>
<dbReference type="PANTHER" id="PTHR11477">
    <property type="entry name" value="TRANSCRIPTION FACTOR S-II ZINC FINGER DOMAIN-CONTAINING PROTEIN"/>
    <property type="match status" value="1"/>
</dbReference>
<dbReference type="Pfam" id="PF07744">
    <property type="entry name" value="SPOC"/>
    <property type="match status" value="1"/>
</dbReference>
<dbReference type="Pfam" id="PF07500">
    <property type="entry name" value="TFIIS_M"/>
    <property type="match status" value="1"/>
</dbReference>
<dbReference type="SMART" id="SM00510">
    <property type="entry name" value="TFS2M"/>
    <property type="match status" value="1"/>
</dbReference>
<dbReference type="SUPFAM" id="SSF46942">
    <property type="entry name" value="Elongation factor TFIIS domain 2"/>
    <property type="match status" value="1"/>
</dbReference>
<dbReference type="PROSITE" id="PS51321">
    <property type="entry name" value="TFIIS_CENTRAL"/>
    <property type="match status" value="1"/>
</dbReference>
<feature type="chain" id="PRO_0000451971" description="SPOC domain-containing protein 1">
    <location>
        <begin position="1"/>
        <end position="1015"/>
    </location>
</feature>
<feature type="domain" description="TFIIS central" evidence="1">
    <location>
        <begin position="410"/>
        <end position="530"/>
    </location>
</feature>
<feature type="domain" description="SPOC">
    <location>
        <begin position="688"/>
        <end position="791"/>
    </location>
</feature>
<feature type="region of interest" description="Disordered" evidence="2">
    <location>
        <begin position="73"/>
        <end position="97"/>
    </location>
</feature>
<feature type="region of interest" description="Disordered" evidence="2">
    <location>
        <begin position="118"/>
        <end position="159"/>
    </location>
</feature>
<feature type="region of interest" description="Disordered" evidence="2">
    <location>
        <begin position="213"/>
        <end position="320"/>
    </location>
</feature>
<feature type="region of interest" description="Disordered" evidence="2">
    <location>
        <begin position="344"/>
        <end position="406"/>
    </location>
</feature>
<feature type="region of interest" description="Disordered" evidence="2">
    <location>
        <begin position="643"/>
        <end position="685"/>
    </location>
</feature>
<feature type="region of interest" description="Disordered" evidence="2">
    <location>
        <begin position="858"/>
        <end position="906"/>
    </location>
</feature>
<feature type="region of interest" description="Disordered" evidence="2">
    <location>
        <begin position="967"/>
        <end position="1015"/>
    </location>
</feature>
<feature type="compositionally biased region" description="Basic and acidic residues" evidence="2">
    <location>
        <begin position="304"/>
        <end position="320"/>
    </location>
</feature>
<feature type="compositionally biased region" description="Polar residues" evidence="2">
    <location>
        <begin position="373"/>
        <end position="382"/>
    </location>
</feature>
<feature type="compositionally biased region" description="Basic and acidic residues" evidence="2">
    <location>
        <begin position="388"/>
        <end position="397"/>
    </location>
</feature>
<feature type="compositionally biased region" description="Polar residues" evidence="2">
    <location>
        <begin position="967"/>
        <end position="978"/>
    </location>
</feature>
<feature type="mutagenesis site" description="Abolished interaction with Spin1. Knockin mice are viable and healthy but show male sterility due to defects in spermatogenesis." evidence="5">
    <original>GIRLVGAASS</original>
    <variation>AAAAAAAAAA</variation>
    <location>
        <begin position="338"/>
        <end position="347"/>
    </location>
</feature>
<feature type="strand" evidence="10">
    <location>
        <begin position="687"/>
        <end position="694"/>
    </location>
</feature>
<feature type="strand" evidence="10">
    <location>
        <begin position="697"/>
        <end position="710"/>
    </location>
</feature>
<feature type="helix" evidence="10">
    <location>
        <begin position="713"/>
        <end position="716"/>
    </location>
</feature>
<feature type="strand" evidence="10">
    <location>
        <begin position="720"/>
        <end position="728"/>
    </location>
</feature>
<feature type="helix" evidence="10">
    <location>
        <begin position="731"/>
        <end position="739"/>
    </location>
</feature>
<feature type="helix" evidence="10">
    <location>
        <begin position="742"/>
        <end position="745"/>
    </location>
</feature>
<feature type="strand" evidence="10">
    <location>
        <begin position="749"/>
        <end position="757"/>
    </location>
</feature>
<feature type="helix" evidence="10">
    <location>
        <begin position="758"/>
        <end position="760"/>
    </location>
</feature>
<feature type="helix" evidence="10">
    <location>
        <begin position="761"/>
        <end position="774"/>
    </location>
</feature>
<feature type="strand" evidence="10">
    <location>
        <begin position="777"/>
        <end position="780"/>
    </location>
</feature>
<feature type="strand" evidence="10">
    <location>
        <begin position="783"/>
        <end position="792"/>
    </location>
</feature>
<feature type="helix" evidence="10">
    <location>
        <begin position="800"/>
        <end position="805"/>
    </location>
</feature>
<feature type="strand" evidence="10">
    <location>
        <begin position="816"/>
        <end position="824"/>
    </location>
</feature>
<evidence type="ECO:0000255" key="1">
    <source>
        <dbReference type="PROSITE-ProRule" id="PRU00651"/>
    </source>
</evidence>
<evidence type="ECO:0000256" key="2">
    <source>
        <dbReference type="SAM" id="MobiDB-lite"/>
    </source>
</evidence>
<evidence type="ECO:0000269" key="3">
    <source>
    </source>
</evidence>
<evidence type="ECO:0000269" key="4">
    <source>
    </source>
</evidence>
<evidence type="ECO:0000269" key="5">
    <source>
    </source>
</evidence>
<evidence type="ECO:0000303" key="6">
    <source>
    </source>
</evidence>
<evidence type="ECO:0000305" key="7"/>
<evidence type="ECO:0000312" key="8">
    <source>
        <dbReference type="MGI" id="MGI:3652045"/>
    </source>
</evidence>
<evidence type="ECO:0007744" key="9">
    <source>
        <dbReference type="PDB" id="8OU1"/>
    </source>
</evidence>
<evidence type="ECO:0007829" key="10">
    <source>
        <dbReference type="PDB" id="8OU1"/>
    </source>
</evidence>
<reference key="1">
    <citation type="journal article" date="2009" name="PLoS Biol.">
        <title>Lineage-specific biology revealed by a finished genome assembly of the mouse.</title>
        <authorList>
            <person name="Church D.M."/>
            <person name="Goodstadt L."/>
            <person name="Hillier L.W."/>
            <person name="Zody M.C."/>
            <person name="Goldstein S."/>
            <person name="She X."/>
            <person name="Bult C.J."/>
            <person name="Agarwala R."/>
            <person name="Cherry J.L."/>
            <person name="DiCuccio M."/>
            <person name="Hlavina W."/>
            <person name="Kapustin Y."/>
            <person name="Meric P."/>
            <person name="Maglott D."/>
            <person name="Birtle Z."/>
            <person name="Marques A.C."/>
            <person name="Graves T."/>
            <person name="Zhou S."/>
            <person name="Teague B."/>
            <person name="Potamousis K."/>
            <person name="Churas C."/>
            <person name="Place M."/>
            <person name="Herschleb J."/>
            <person name="Runnheim R."/>
            <person name="Forrest D."/>
            <person name="Amos-Landgraf J."/>
            <person name="Schwartz D.C."/>
            <person name="Cheng Z."/>
            <person name="Lindblad-Toh K."/>
            <person name="Eichler E.E."/>
            <person name="Ponting C.P."/>
        </authorList>
    </citation>
    <scope>NUCLEOTIDE SEQUENCE [LARGE SCALE GENOMIC DNA]</scope>
    <source>
        <strain>C57BL/6J</strain>
    </source>
</reference>
<reference key="2">
    <citation type="journal article" date="2020" name="Nature">
        <title>SPOCD1 is an essential executor of piRNA-directed de novo DNA methylation.</title>
        <authorList>
            <person name="Zoch A."/>
            <person name="Auchynnikava T."/>
            <person name="Berrens R.V."/>
            <person name="Kabayama Y."/>
            <person name="Schoepp T."/>
            <person name="Heep M."/>
            <person name="Vasiliauskaite L."/>
            <person name="Perez-Rico Y.A."/>
            <person name="Cook A.G."/>
            <person name="Shkumatava A."/>
            <person name="Rappsilber J."/>
            <person name="Allshire R.C."/>
            <person name="O'Carroll D."/>
        </authorList>
    </citation>
    <scope>FUNCTION</scope>
    <scope>SUBCELLULAR LOCATION</scope>
    <scope>DISRUPTION PHENOTYPE</scope>
    <scope>INTERACTION WITH DNMT3A; DNMT3C AND DNMT3L</scope>
</reference>
<reference key="3">
    <citation type="journal article" date="2024" name="Nature">
        <title>Two-factor authentication underpins the precision of the piRNA pathway.</title>
        <authorList>
            <person name="Dias Mirandela M."/>
            <person name="Zoch A."/>
            <person name="Leismann J."/>
            <person name="Webb S."/>
            <person name="Berrens R.V."/>
            <person name="Valsakumar D."/>
            <person name="Kabayama Y."/>
            <person name="Auchynnikava T."/>
            <person name="Schito M."/>
            <person name="Chowdhury T."/>
            <person name="MacLeod D."/>
            <person name="Xiang X."/>
            <person name="Zou J."/>
            <person name="Rappsilber J."/>
            <person name="Allshire R.C."/>
            <person name="Voigt P."/>
            <person name="Cook A.G."/>
            <person name="Barau J."/>
            <person name="O'Carroll D."/>
        </authorList>
    </citation>
    <scope>FUNCTION</scope>
    <scope>SUBCELLULAR LOCATION</scope>
    <scope>INTERACTION WITH SPIN1</scope>
    <scope>MUTAGENESIS OF 338-GLY--SER-347</scope>
</reference>
<reference evidence="9" key="4">
    <citation type="journal article" date="2024" name="Mol. Cell">
        <title>C19ORF84 connects piRNA and DNA methylation machineries to defend the mammalian germ line.</title>
        <authorList>
            <person name="Zoch A."/>
            <person name="Konieczny G."/>
            <person name="Auchynnikava T."/>
            <person name="Stallmeyer B."/>
            <person name="Rotte N."/>
            <person name="Heep M."/>
            <person name="Berrens R.V."/>
            <person name="Schito M."/>
            <person name="Kabayama Y."/>
            <person name="Schopp T."/>
            <person name="Kliesch S."/>
            <person name="Houston B."/>
            <person name="Nagirnaja L."/>
            <person name="O'Bryan M.K."/>
            <person name="Aston K.I."/>
            <person name="Conrad D.F."/>
            <person name="Rappsilber J."/>
            <person name="Allshire R.C."/>
            <person name="Cook A.G."/>
            <person name="Tuttelmann F."/>
            <person name="O'Carroll D."/>
        </authorList>
    </citation>
    <scope>X-RAY CRYSTALLOGRAPHY (1.70 ANGSTROMS) OF 687-830</scope>
    <scope>FUNCTION</scope>
    <scope>INTERACTION WITH C19ORF84</scope>
</reference>
<accession>B1ASB6</accession>
<name>SPOC1_MOUSE</name>
<proteinExistence type="evidence at protein level"/>
<protein>
    <recommendedName>
        <fullName evidence="7">SPOC domain-containing protein 1</fullName>
    </recommendedName>
</protein>
<gene>
    <name evidence="6 8" type="primary">Spocd1</name>
</gene>